<gene>
    <name type="primary">GID2</name>
    <name type="ordered locus">Os02g0580300</name>
    <name type="ordered locus">LOC_Os02g36974</name>
</gene>
<dbReference type="EMBL" id="AB100246">
    <property type="protein sequence ID" value="BAC81428.1"/>
    <property type="molecule type" value="mRNA"/>
</dbReference>
<dbReference type="EMBL" id="AP003999">
    <property type="status" value="NOT_ANNOTATED_CDS"/>
    <property type="molecule type" value="Genomic_DNA"/>
</dbReference>
<dbReference type="EMBL" id="AP014958">
    <property type="status" value="NOT_ANNOTATED_CDS"/>
    <property type="molecule type" value="Genomic_DNA"/>
</dbReference>
<dbReference type="FunCoup" id="Q7XAK4">
    <property type="interactions" value="1805"/>
</dbReference>
<dbReference type="STRING" id="39947.Q7XAK4"/>
<dbReference type="PaxDb" id="39947-Q7XAK4"/>
<dbReference type="EnsemblPlants" id="Os02t0580300-04">
    <property type="protein sequence ID" value="Os02t0580300-04"/>
    <property type="gene ID" value="Os02g0580300"/>
</dbReference>
<dbReference type="Gramene" id="Os02t0580300-04">
    <property type="protein sequence ID" value="Os02t0580300-04"/>
    <property type="gene ID" value="Os02g0580300"/>
</dbReference>
<dbReference type="InParanoid" id="Q7XAK4"/>
<dbReference type="PlantReactome" id="R-OSA-5679411">
    <property type="pathway name" value="Gibberellin signaling"/>
</dbReference>
<dbReference type="UniPathway" id="UPA00143"/>
<dbReference type="Proteomes" id="UP000000763">
    <property type="component" value="Chromosome 2"/>
</dbReference>
<dbReference type="Proteomes" id="UP000059680">
    <property type="component" value="Chromosome 2"/>
</dbReference>
<dbReference type="ExpressionAtlas" id="Q7XAK4">
    <property type="expression patterns" value="baseline and differential"/>
</dbReference>
<dbReference type="GO" id="GO:0005737">
    <property type="term" value="C:cytoplasm"/>
    <property type="evidence" value="ECO:0000318"/>
    <property type="project" value="GO_Central"/>
</dbReference>
<dbReference type="GO" id="GO:0005634">
    <property type="term" value="C:nucleus"/>
    <property type="evidence" value="ECO:0000314"/>
    <property type="project" value="Gramene"/>
</dbReference>
<dbReference type="GO" id="GO:0019005">
    <property type="term" value="C:SCF ubiquitin ligase complex"/>
    <property type="evidence" value="ECO:0000314"/>
    <property type="project" value="Gramene"/>
</dbReference>
<dbReference type="GO" id="GO:0009740">
    <property type="term" value="P:gibberellic acid mediated signaling pathway"/>
    <property type="evidence" value="ECO:0000315"/>
    <property type="project" value="Gramene"/>
</dbReference>
<dbReference type="GO" id="GO:0016567">
    <property type="term" value="P:protein ubiquitination"/>
    <property type="evidence" value="ECO:0007669"/>
    <property type="project" value="UniProtKB-UniPathway"/>
</dbReference>
<dbReference type="GO" id="GO:0009937">
    <property type="term" value="P:regulation of gibberellic acid mediated signaling pathway"/>
    <property type="evidence" value="ECO:0007669"/>
    <property type="project" value="InterPro"/>
</dbReference>
<dbReference type="GO" id="GO:0010265">
    <property type="term" value="P:SCF complex assembly"/>
    <property type="evidence" value="ECO:0000314"/>
    <property type="project" value="Gramene"/>
</dbReference>
<dbReference type="GO" id="GO:0031146">
    <property type="term" value="P:SCF-dependent proteasomal ubiquitin-dependent protein catabolic process"/>
    <property type="evidence" value="ECO:0000314"/>
    <property type="project" value="Gramene"/>
</dbReference>
<dbReference type="FunFam" id="1.20.1280.50:FF:000067">
    <property type="entry name" value="F-box protein GID2"/>
    <property type="match status" value="1"/>
</dbReference>
<dbReference type="Gene3D" id="1.20.1280.50">
    <property type="match status" value="1"/>
</dbReference>
<dbReference type="InterPro" id="IPR036047">
    <property type="entry name" value="F-box-like_dom_sf"/>
</dbReference>
<dbReference type="InterPro" id="IPR001810">
    <property type="entry name" value="F-box_dom"/>
</dbReference>
<dbReference type="InterPro" id="IPR044184">
    <property type="entry name" value="SNE/GID2"/>
</dbReference>
<dbReference type="PANTHER" id="PTHR47750:SF7">
    <property type="entry name" value="F-BOX PROTEIN"/>
    <property type="match status" value="1"/>
</dbReference>
<dbReference type="PANTHER" id="PTHR47750">
    <property type="entry name" value="F-BOX PROTEIN SNE"/>
    <property type="match status" value="1"/>
</dbReference>
<dbReference type="Pfam" id="PF12937">
    <property type="entry name" value="F-box-like"/>
    <property type="match status" value="1"/>
</dbReference>
<dbReference type="SUPFAM" id="SSF81383">
    <property type="entry name" value="F-box domain"/>
    <property type="match status" value="1"/>
</dbReference>
<feature type="chain" id="PRO_0000119963" description="F-box protein GID2">
    <location>
        <begin position="1"/>
        <end position="212"/>
    </location>
</feature>
<feature type="domain" description="F-box">
    <location>
        <begin position="70"/>
        <end position="116"/>
    </location>
</feature>
<feature type="region of interest" description="Disordered" evidence="1">
    <location>
        <begin position="1"/>
        <end position="74"/>
    </location>
</feature>
<feature type="compositionally biased region" description="Low complexity" evidence="1">
    <location>
        <begin position="35"/>
        <end position="59"/>
    </location>
</feature>
<protein>
    <recommendedName>
        <fullName>F-box protein GID2</fullName>
    </recommendedName>
    <alternativeName>
        <fullName>Gibberellin-insensitive dwarf protein 2</fullName>
    </alternativeName>
    <alternativeName>
        <fullName>Protein GIBBERELLIN INSENSITIVE DWARF2</fullName>
    </alternativeName>
</protein>
<sequence length="212" mass="23051">MKFRSDSSGGDEPRAPAAGDGGGGGDEPAKRQRTDPSSSSSQGEASSSSQPPPQQQQEEQPPEDAGEGEQPRVPDLGEDLVFEVLRRAEARTLAAAACVSRGWRQLAEDERLWEAACVREWANLGFSERQLRAVVLSLGGFRRLHAVYIRPLQWRGAGVPRQQGRRQPPVRLGRDQVQLSLSLFSIGFFQNMPCPKKDKGNDSDKNGGGQCG</sequence>
<organism>
    <name type="scientific">Oryza sativa subsp. japonica</name>
    <name type="common">Rice</name>
    <dbReference type="NCBI Taxonomy" id="39947"/>
    <lineage>
        <taxon>Eukaryota</taxon>
        <taxon>Viridiplantae</taxon>
        <taxon>Streptophyta</taxon>
        <taxon>Embryophyta</taxon>
        <taxon>Tracheophyta</taxon>
        <taxon>Spermatophyta</taxon>
        <taxon>Magnoliopsida</taxon>
        <taxon>Liliopsida</taxon>
        <taxon>Poales</taxon>
        <taxon>Poaceae</taxon>
        <taxon>BOP clade</taxon>
        <taxon>Oryzoideae</taxon>
        <taxon>Oryzeae</taxon>
        <taxon>Oryzinae</taxon>
        <taxon>Oryza</taxon>
        <taxon>Oryza sativa</taxon>
    </lineage>
</organism>
<keyword id="KW-0939">Gibberellin signaling pathway</keyword>
<keyword id="KW-0539">Nucleus</keyword>
<keyword id="KW-1185">Reference proteome</keyword>
<keyword id="KW-0833">Ubl conjugation pathway</keyword>
<accession>Q7XAK4</accession>
<evidence type="ECO:0000256" key="1">
    <source>
        <dbReference type="SAM" id="MobiDB-lite"/>
    </source>
</evidence>
<evidence type="ECO:0000269" key="2">
    <source>
    </source>
</evidence>
<evidence type="ECO:0000269" key="3">
    <source>
    </source>
</evidence>
<proteinExistence type="evidence at protein level"/>
<name>GID2_ORYSJ</name>
<reference key="1">
    <citation type="journal article" date="2003" name="Science">
        <title>Accumulation of phosphorylated repressor for gibberellin signaling in an F-box mutant.</title>
        <authorList>
            <person name="Sasaki A."/>
            <person name="Itoh H."/>
            <person name="Gomi K."/>
            <person name="Ueguchi-Tanaka M."/>
            <person name="Ishiyama K."/>
            <person name="Kobayashi M."/>
            <person name="Jeong D.-H."/>
            <person name="An G."/>
            <person name="Kitano H."/>
            <person name="Ashikari M."/>
            <person name="Matsuoka M."/>
        </authorList>
    </citation>
    <scope>NUCLEOTIDE SEQUENCE [MRNA]</scope>
    <scope>FUNCTION</scope>
    <scope>SUBCELLULAR LOCATION</scope>
    <scope>COMPONENT OF A SCF COMPLEX</scope>
    <scope>INTERACTION WITH SLR1 AND SKP2</scope>
</reference>
<reference key="2">
    <citation type="journal article" date="2005" name="Nature">
        <title>The map-based sequence of the rice genome.</title>
        <authorList>
            <consortium name="International rice genome sequencing project (IRGSP)"/>
        </authorList>
    </citation>
    <scope>NUCLEOTIDE SEQUENCE [LARGE SCALE GENOMIC DNA]</scope>
    <source>
        <strain>cv. Nipponbare</strain>
    </source>
</reference>
<reference key="3">
    <citation type="journal article" date="2013" name="Rice">
        <title>Improvement of the Oryza sativa Nipponbare reference genome using next generation sequence and optical map data.</title>
        <authorList>
            <person name="Kawahara Y."/>
            <person name="de la Bastide M."/>
            <person name="Hamilton J.P."/>
            <person name="Kanamori H."/>
            <person name="McCombie W.R."/>
            <person name="Ouyang S."/>
            <person name="Schwartz D.C."/>
            <person name="Tanaka T."/>
            <person name="Wu J."/>
            <person name="Zhou S."/>
            <person name="Childs K.L."/>
            <person name="Davidson R.M."/>
            <person name="Lin H."/>
            <person name="Quesada-Ocampo L."/>
            <person name="Vaillancourt B."/>
            <person name="Sakai H."/>
            <person name="Lee S.S."/>
            <person name="Kim J."/>
            <person name="Numa H."/>
            <person name="Itoh T."/>
            <person name="Buell C.R."/>
            <person name="Matsumoto T."/>
        </authorList>
    </citation>
    <scope>GENOME REANNOTATION</scope>
    <source>
        <strain>cv. Nipponbare</strain>
    </source>
</reference>
<reference key="4">
    <citation type="journal article" date="2004" name="Plant J.">
        <title>GID2, an F-box subunit of the SCF E3 complex, specifically interacts with phosphorylated SLR1 protein and regulates the gibberellin-dependent degradation of SLR1 in rice.</title>
        <authorList>
            <person name="Gomi K."/>
            <person name="Sasaki A."/>
            <person name="Itoh H."/>
            <person name="Ueguchi-Tanaka M."/>
            <person name="Ashikari M."/>
            <person name="Kitano H."/>
            <person name="Matsuoka M."/>
        </authorList>
    </citation>
    <scope>FUNCTION</scope>
    <scope>SUBCELLULAR LOCATION</scope>
    <scope>TISSUE SPECIFICITY</scope>
    <scope>INTERACTION WITH CUL1; SKP15 AND SLR1</scope>
</reference>
<comment type="function">
    <text evidence="2 3">Essential component of some SCF-type E3 ligase complex that positively regulates the gibberellin signaling pathway. Upon gibberellin treatment, the complex mediates the ubiquitination and subsequent degradation of DELLA protein SLR1, a repressor of the gibberellin pathway, leading to activate the pathway.</text>
</comment>
<comment type="pathway">
    <text>Protein modification; protein ubiquitination.</text>
</comment>
<comment type="subunit">
    <text evidence="2 3">Part of some SCF(GID2) complex, which consist of a SKP1 protein, CUL1, GID2 and some RING box protein. Interacts directly with SKP2 and SKP15. Interacts directly with DELLA protein SLR1. May have a higher affinity for phosphorylated SLR1 proteins.</text>
</comment>
<comment type="subcellular location">
    <subcellularLocation>
        <location evidence="2 3">Nucleus</location>
    </subcellularLocation>
</comment>
<comment type="tissue specificity">
    <text evidence="3">Widely expressed. Preferentially expressed in unopened flowers, shoot apices and elongation stem. Expressed at lower level in the leaf blades, leaf sheaths, roots and rachis.</text>
</comment>